<organism>
    <name type="scientific">Arabidopsis thaliana</name>
    <name type="common">Mouse-ear cress</name>
    <dbReference type="NCBI Taxonomy" id="3702"/>
    <lineage>
        <taxon>Eukaryota</taxon>
        <taxon>Viridiplantae</taxon>
        <taxon>Streptophyta</taxon>
        <taxon>Embryophyta</taxon>
        <taxon>Tracheophyta</taxon>
        <taxon>Spermatophyta</taxon>
        <taxon>Magnoliopsida</taxon>
        <taxon>eudicotyledons</taxon>
        <taxon>Gunneridae</taxon>
        <taxon>Pentapetalae</taxon>
        <taxon>rosids</taxon>
        <taxon>malvids</taxon>
        <taxon>Brassicales</taxon>
        <taxon>Brassicaceae</taxon>
        <taxon>Camelineae</taxon>
        <taxon>Arabidopsis</taxon>
    </lineage>
</organism>
<accession>Q39256</accession>
<comment type="function">
    <text evidence="1">Ubiquitin exists either covalently attached to another protein, or free (unanchored). When covalently bound, it is conjugated to target proteins via an isopeptide bond either as a monomer (monoubiquitin), a polymer linked via different Lys residues of the ubiquitin (polyubiquitin chains) or a linear polymer linked via the initiator Met of the ubiquitin (linear polyubiquitin chains). Polyubiquitin chains, when attached to a target protein, have different functions depending on the Lys residue of the ubiquitin that is linked: Lys-11-linked is involved in ERAD (endoplasmic reticulum-associated degradation) and in cell-cycle regulation; Lys-29-linked is involved in lysosomal degradation; Lys-33-linked is involved in kinase modification; Lys-48-linked is involved in protein degradation via the proteasome; Lys-63-linked is involved in endocytosis, and DNA-damage responses. Linear polymer chains formed via attachment by the initiator Met lead to cell signaling. Ubiquitin is usually conjugated to Lys residues of target proteins, however, in rare cases, conjugation to Cys or Ser residues has been observed. When polyubiquitin is free (unanchored-polyubiquitin), it also has distinct roles, such as in activation of protein kinases, and in signaling (By similarity).</text>
</comment>
<comment type="subcellular location">
    <subcellularLocation>
        <location evidence="1">Cytoplasm</location>
    </subcellularLocation>
    <subcellularLocation>
        <location evidence="1">Nucleus</location>
    </subcellularLocation>
</comment>
<comment type="miscellaneous">
    <text>Ubiquitin is encoded by 16 different genes. Ubiquitin is generally synthesized as a polyubiquitin precursor with tandem head to tail repeats. Often, there is one to three additional amino acids after the last repeat, removed in the mature protein. Alternatively, ubiquitin extension protein is synthesized as a single copy of ubiquitin fused to a ribosomal protein (either eL40 or eS31) or to a ubiquitin-related protein (either RUB1 or RUB2). Following translation, extension protein is cleaved from ubiquitin.</text>
</comment>
<comment type="similarity">
    <text evidence="3">Belongs to the ubiquitin family.</text>
</comment>
<keyword id="KW-0963">Cytoplasm</keyword>
<keyword id="KW-1017">Isopeptide bond</keyword>
<keyword id="KW-0539">Nucleus</keyword>
<keyword id="KW-1185">Reference proteome</keyword>
<keyword id="KW-0677">Repeat</keyword>
<keyword id="KW-0833">Ubl conjugation pathway</keyword>
<dbReference type="EMBL" id="L05917">
    <property type="protein sequence ID" value="AAA68879.1"/>
    <property type="molecule type" value="Genomic_DNA"/>
</dbReference>
<dbReference type="EMBL" id="AC015985">
    <property type="protein sequence ID" value="AAF23256.1"/>
    <property type="molecule type" value="Genomic_DNA"/>
</dbReference>
<dbReference type="EMBL" id="AC016661">
    <property type="protein sequence ID" value="AAF23307.1"/>
    <property type="molecule type" value="Genomic_DNA"/>
</dbReference>
<dbReference type="EMBL" id="CP002686">
    <property type="protein sequence ID" value="AEE74813.1"/>
    <property type="molecule type" value="Genomic_DNA"/>
</dbReference>
<dbReference type="EMBL" id="CP002686">
    <property type="protein sequence ID" value="ANM63421.1"/>
    <property type="molecule type" value="Genomic_DNA"/>
</dbReference>
<dbReference type="PIR" id="S55243">
    <property type="entry name" value="S55243"/>
</dbReference>
<dbReference type="RefSeq" id="NP_001319513.1">
    <property type="nucleotide sequence ID" value="NM_001337841.1"/>
</dbReference>
<dbReference type="RefSeq" id="NP_566357.1">
    <property type="nucleotide sequence ID" value="NM_111814.2"/>
</dbReference>
<dbReference type="SMR" id="Q39256"/>
<dbReference type="BioGRID" id="5471">
    <property type="interactions" value="2"/>
</dbReference>
<dbReference type="FunCoup" id="Q39256">
    <property type="interactions" value="11"/>
</dbReference>
<dbReference type="STRING" id="3702.Q39256"/>
<dbReference type="PaxDb" id="3702-AT3G09790.1"/>
<dbReference type="ProteomicsDB" id="232996"/>
<dbReference type="EnsemblPlants" id="AT3G09790.1">
    <property type="protein sequence ID" value="AT3G09790.1"/>
    <property type="gene ID" value="AT3G09790"/>
</dbReference>
<dbReference type="EnsemblPlants" id="AT3G09790.2">
    <property type="protein sequence ID" value="AT3G09790.2"/>
    <property type="gene ID" value="AT3G09790"/>
</dbReference>
<dbReference type="GeneID" id="820137"/>
<dbReference type="Gramene" id="AT3G09790.1">
    <property type="protein sequence ID" value="AT3G09790.1"/>
    <property type="gene ID" value="AT3G09790"/>
</dbReference>
<dbReference type="Gramene" id="AT3G09790.2">
    <property type="protein sequence ID" value="AT3G09790.2"/>
    <property type="gene ID" value="AT3G09790"/>
</dbReference>
<dbReference type="KEGG" id="ath:AT3G09790"/>
<dbReference type="Araport" id="AT3G09790"/>
<dbReference type="TAIR" id="AT3G09790">
    <property type="gene designation" value="UBQ8"/>
</dbReference>
<dbReference type="eggNOG" id="KOG0001">
    <property type="taxonomic scope" value="Eukaryota"/>
</dbReference>
<dbReference type="HOGENOM" id="CLU_010412_1_1_1"/>
<dbReference type="InParanoid" id="Q39256"/>
<dbReference type="OMA" id="SWDTIEN"/>
<dbReference type="PhylomeDB" id="Q39256"/>
<dbReference type="PRO" id="PR:Q39256"/>
<dbReference type="Proteomes" id="UP000006548">
    <property type="component" value="Chromosome 3"/>
</dbReference>
<dbReference type="ExpressionAtlas" id="Q39256">
    <property type="expression patterns" value="baseline and differential"/>
</dbReference>
<dbReference type="GO" id="GO:0005829">
    <property type="term" value="C:cytosol"/>
    <property type="evidence" value="ECO:0007005"/>
    <property type="project" value="TAIR"/>
</dbReference>
<dbReference type="GO" id="GO:0005634">
    <property type="term" value="C:nucleus"/>
    <property type="evidence" value="ECO:0007669"/>
    <property type="project" value="UniProtKB-SubCell"/>
</dbReference>
<dbReference type="GO" id="GO:0009505">
    <property type="term" value="C:plant-type cell wall"/>
    <property type="evidence" value="ECO:0007005"/>
    <property type="project" value="TAIR"/>
</dbReference>
<dbReference type="GO" id="GO:0000325">
    <property type="term" value="C:plant-type vacuole"/>
    <property type="evidence" value="ECO:0007005"/>
    <property type="project" value="TAIR"/>
</dbReference>
<dbReference type="GO" id="GO:0003729">
    <property type="term" value="F:mRNA binding"/>
    <property type="evidence" value="ECO:0007669"/>
    <property type="project" value="UniProtKB-ARBA"/>
</dbReference>
<dbReference type="GO" id="GO:0006511">
    <property type="term" value="P:ubiquitin-dependent protein catabolic process"/>
    <property type="evidence" value="ECO:0000250"/>
    <property type="project" value="TAIR"/>
</dbReference>
<dbReference type="CDD" id="cd01803">
    <property type="entry name" value="Ubl_ubiquitin"/>
    <property type="match status" value="2"/>
</dbReference>
<dbReference type="FunFam" id="3.10.20.90:FF:000006">
    <property type="entry name" value="Polyubiquitin 10"/>
    <property type="match status" value="1"/>
</dbReference>
<dbReference type="FunFam" id="3.10.20.90:FF:000016">
    <property type="entry name" value="Polyubiquitin 3"/>
    <property type="match status" value="1"/>
</dbReference>
<dbReference type="FunFam" id="3.10.20.90:FF:000562">
    <property type="entry name" value="Polyubiquitin 8"/>
    <property type="match status" value="1"/>
</dbReference>
<dbReference type="FunFam" id="3.10.20.90:FF:000604">
    <property type="entry name" value="Polyubiquitin 8"/>
    <property type="match status" value="1"/>
</dbReference>
<dbReference type="FunFam" id="3.10.20.90:FF:000160">
    <property type="entry name" value="Polyubiquitin-C"/>
    <property type="match status" value="3"/>
</dbReference>
<dbReference type="FunFam" id="3.10.20.90:FF:000009">
    <property type="entry name" value="Ubiquitin-60S ribosomal protein"/>
    <property type="match status" value="1"/>
</dbReference>
<dbReference type="Gene3D" id="3.10.20.90">
    <property type="entry name" value="Phosphatidylinositol 3-kinase Catalytic Subunit, Chain A, domain 1"/>
    <property type="match status" value="8"/>
</dbReference>
<dbReference type="InterPro" id="IPR000626">
    <property type="entry name" value="Ubiquitin-like_dom"/>
</dbReference>
<dbReference type="InterPro" id="IPR029071">
    <property type="entry name" value="Ubiquitin-like_domsf"/>
</dbReference>
<dbReference type="InterPro" id="IPR019956">
    <property type="entry name" value="Ubiquitin_dom"/>
</dbReference>
<dbReference type="InterPro" id="IPR050158">
    <property type="entry name" value="Ubiquitin_ubiquitin-like"/>
</dbReference>
<dbReference type="PANTHER" id="PTHR10666">
    <property type="entry name" value="UBIQUITIN"/>
    <property type="match status" value="1"/>
</dbReference>
<dbReference type="Pfam" id="PF00240">
    <property type="entry name" value="ubiquitin"/>
    <property type="match status" value="8"/>
</dbReference>
<dbReference type="PRINTS" id="PR00348">
    <property type="entry name" value="UBIQUITIN"/>
</dbReference>
<dbReference type="SMART" id="SM00213">
    <property type="entry name" value="UBQ"/>
    <property type="match status" value="8"/>
</dbReference>
<dbReference type="SUPFAM" id="SSF54236">
    <property type="entry name" value="Ubiquitin-like"/>
    <property type="match status" value="8"/>
</dbReference>
<dbReference type="PROSITE" id="PS50053">
    <property type="entry name" value="UBIQUITIN_2"/>
    <property type="match status" value="8"/>
</dbReference>
<name>UBQ8_ARATH</name>
<reference key="1">
    <citation type="journal article" date="1995" name="Genetics">
        <title>Structure and evolution of genes encoding polyubiquitin and ubiquitin-like proteins in Arabidopsis thaliana ecotype Columbia.</title>
        <authorList>
            <person name="Callis J."/>
            <person name="Carpenter T."/>
            <person name="Sun C.W."/>
            <person name="Vierstra R.D."/>
        </authorList>
    </citation>
    <scope>NUCLEOTIDE SEQUENCE [GENOMIC DNA]</scope>
    <source>
        <strain>cv. Columbia</strain>
    </source>
</reference>
<reference key="2">
    <citation type="journal article" date="2000" name="Nature">
        <title>Sequence and analysis of chromosome 3 of the plant Arabidopsis thaliana.</title>
        <authorList>
            <person name="Salanoubat M."/>
            <person name="Lemcke K."/>
            <person name="Rieger M."/>
            <person name="Ansorge W."/>
            <person name="Unseld M."/>
            <person name="Fartmann B."/>
            <person name="Valle G."/>
            <person name="Bloecker H."/>
            <person name="Perez-Alonso M."/>
            <person name="Obermaier B."/>
            <person name="Delseny M."/>
            <person name="Boutry M."/>
            <person name="Grivell L.A."/>
            <person name="Mache R."/>
            <person name="Puigdomenech P."/>
            <person name="De Simone V."/>
            <person name="Choisne N."/>
            <person name="Artiguenave F."/>
            <person name="Robert C."/>
            <person name="Brottier P."/>
            <person name="Wincker P."/>
            <person name="Cattolico L."/>
            <person name="Weissenbach J."/>
            <person name="Saurin W."/>
            <person name="Quetier F."/>
            <person name="Schaefer M."/>
            <person name="Mueller-Auer S."/>
            <person name="Gabel C."/>
            <person name="Fuchs M."/>
            <person name="Benes V."/>
            <person name="Wurmbach E."/>
            <person name="Drzonek H."/>
            <person name="Erfle H."/>
            <person name="Jordan N."/>
            <person name="Bangert S."/>
            <person name="Wiedelmann R."/>
            <person name="Kranz H."/>
            <person name="Voss H."/>
            <person name="Holland R."/>
            <person name="Brandt P."/>
            <person name="Nyakatura G."/>
            <person name="Vezzi A."/>
            <person name="D'Angelo M."/>
            <person name="Pallavicini A."/>
            <person name="Toppo S."/>
            <person name="Simionati B."/>
            <person name="Conrad A."/>
            <person name="Hornischer K."/>
            <person name="Kauer G."/>
            <person name="Loehnert T.-H."/>
            <person name="Nordsiek G."/>
            <person name="Reichelt J."/>
            <person name="Scharfe M."/>
            <person name="Schoen O."/>
            <person name="Bargues M."/>
            <person name="Terol J."/>
            <person name="Climent J."/>
            <person name="Navarro P."/>
            <person name="Collado C."/>
            <person name="Perez-Perez A."/>
            <person name="Ottenwaelder B."/>
            <person name="Duchemin D."/>
            <person name="Cooke R."/>
            <person name="Laudie M."/>
            <person name="Berger-Llauro C."/>
            <person name="Purnelle B."/>
            <person name="Masuy D."/>
            <person name="de Haan M."/>
            <person name="Maarse A.C."/>
            <person name="Alcaraz J.-P."/>
            <person name="Cottet A."/>
            <person name="Casacuberta E."/>
            <person name="Monfort A."/>
            <person name="Argiriou A."/>
            <person name="Flores M."/>
            <person name="Liguori R."/>
            <person name="Vitale D."/>
            <person name="Mannhaupt G."/>
            <person name="Haase D."/>
            <person name="Schoof H."/>
            <person name="Rudd S."/>
            <person name="Zaccaria P."/>
            <person name="Mewes H.-W."/>
            <person name="Mayer K.F.X."/>
            <person name="Kaul S."/>
            <person name="Town C.D."/>
            <person name="Koo H.L."/>
            <person name="Tallon L.J."/>
            <person name="Jenkins J."/>
            <person name="Rooney T."/>
            <person name="Rizzo M."/>
            <person name="Walts A."/>
            <person name="Utterback T."/>
            <person name="Fujii C.Y."/>
            <person name="Shea T.P."/>
            <person name="Creasy T.H."/>
            <person name="Haas B."/>
            <person name="Maiti R."/>
            <person name="Wu D."/>
            <person name="Peterson J."/>
            <person name="Van Aken S."/>
            <person name="Pai G."/>
            <person name="Militscher J."/>
            <person name="Sellers P."/>
            <person name="Gill J.E."/>
            <person name="Feldblyum T.V."/>
            <person name="Preuss D."/>
            <person name="Lin X."/>
            <person name="Nierman W.C."/>
            <person name="Salzberg S.L."/>
            <person name="White O."/>
            <person name="Venter J.C."/>
            <person name="Fraser C.M."/>
            <person name="Kaneko T."/>
            <person name="Nakamura Y."/>
            <person name="Sato S."/>
            <person name="Kato T."/>
            <person name="Asamizu E."/>
            <person name="Sasamoto S."/>
            <person name="Kimura T."/>
            <person name="Idesawa K."/>
            <person name="Kawashima K."/>
            <person name="Kishida Y."/>
            <person name="Kiyokawa C."/>
            <person name="Kohara M."/>
            <person name="Matsumoto M."/>
            <person name="Matsuno A."/>
            <person name="Muraki A."/>
            <person name="Nakayama S."/>
            <person name="Nakazaki N."/>
            <person name="Shinpo S."/>
            <person name="Takeuchi C."/>
            <person name="Wada T."/>
            <person name="Watanabe A."/>
            <person name="Yamada M."/>
            <person name="Yasuda M."/>
            <person name="Tabata S."/>
        </authorList>
    </citation>
    <scope>NUCLEOTIDE SEQUENCE [LARGE SCALE GENOMIC DNA]</scope>
    <source>
        <strain>cv. Columbia</strain>
    </source>
</reference>
<reference key="3">
    <citation type="journal article" date="2017" name="Plant J.">
        <title>Araport11: a complete reannotation of the Arabidopsis thaliana reference genome.</title>
        <authorList>
            <person name="Cheng C.Y."/>
            <person name="Krishnakumar V."/>
            <person name="Chan A.P."/>
            <person name="Thibaud-Nissen F."/>
            <person name="Schobel S."/>
            <person name="Town C.D."/>
        </authorList>
    </citation>
    <scope>GENOME REANNOTATION</scope>
    <source>
        <strain>cv. Columbia</strain>
    </source>
</reference>
<sequence>MTIQIYAKTLTEKTITLDVETSDSIHNVKAKIQNKEGIPLDQQRLIFAGKQLEDGLTLADYNIQKESTLHLVLRLRGGMQIFVQTLTGKTITLEVKSSDTIDNVKAKIQDKEGILPRQQRLIFAGKQLEDGRTLADYNIQKESTLHLVLRLCGGMQIFVSTFSGKNFTSDTLTLKVESSDTIENVKAKIQDREGLRPDHQRLIFHGEELFTEDNRTLADYGIRNRSTLCLALRLRGDMYIFVKNLPYNSFTGENFILEVESSDTIDNVKAKLQDKERIPMDLHRLIFAGKPLEGGRTLAHYNIQKGSTLYLVTRFRCGMQIFVKTLTRKRINLEVESWDTIENVKAMVQDKEGIQPQPNLQRLIFLGKELKDGCTLADYSIQKESTLHLVLGMQIFVKLFGGKIITLEVLSSDTIKSVKAKIQDKVGSPPDQQILLFRGGQLQDGRTLGDYNIRNESTLHLFFHIRHGMQIFVKTFSFSGETPTCKTITLEVESSDTIDNVKVKIQHKVGIPLDRQRLIFGGRVLVGSRTLLDYNIQKGSTIHQLFLQRGGMQIFIKTLTGKTIILEVESSDTIANVKEKIQVKEGIKPDQQMLIFFGQQLEDGVTLGDYDIHKKSTLYLVLRLRQRRYDF</sequence>
<protein>
    <recommendedName>
        <fullName>Polyubiquitin 8</fullName>
    </recommendedName>
    <component>
        <recommendedName>
            <fullName>Ubiquitin-related 1</fullName>
        </recommendedName>
    </component>
    <component>
        <recommendedName>
            <fullName>Ubiquitin-related 2</fullName>
        </recommendedName>
    </component>
    <component>
        <recommendedName>
            <fullName>Ubiquitin-related 3</fullName>
        </recommendedName>
    </component>
    <component>
        <recommendedName>
            <fullName>Ubiquitin-related 4</fullName>
        </recommendedName>
    </component>
    <component>
        <recommendedName>
            <fullName>Ubiquitin-related 5</fullName>
        </recommendedName>
    </component>
    <component>
        <recommendedName>
            <fullName>Ubiquitin-related 6</fullName>
        </recommendedName>
    </component>
    <component>
        <recommendedName>
            <fullName>Ubiquitin-related 7</fullName>
        </recommendedName>
    </component>
    <component>
        <recommendedName>
            <fullName>Ubiquitin-related 8</fullName>
        </recommendedName>
    </component>
</protein>
<proteinExistence type="inferred from homology"/>
<feature type="chain" id="PRO_0000396915" description="Ubiquitin-related 1">
    <location>
        <begin position="1"/>
        <end position="78"/>
    </location>
</feature>
<feature type="chain" id="PRO_0000396916" description="Ubiquitin-related 2">
    <location>
        <begin position="79"/>
        <end position="154"/>
    </location>
</feature>
<feature type="chain" id="PRO_0000396917" description="Ubiquitin-related 3">
    <location>
        <begin position="155"/>
        <end position="237"/>
    </location>
</feature>
<feature type="chain" id="PRO_0000396918" description="Ubiquitin-related 4">
    <location>
        <begin position="238"/>
        <end position="318"/>
    </location>
</feature>
<feature type="chain" id="PRO_0000396919" description="Ubiquitin-related 5">
    <location>
        <begin position="319"/>
        <end position="392"/>
    </location>
</feature>
<feature type="chain" id="PRO_0000396920" description="Ubiquitin-related 6">
    <location>
        <begin position="393"/>
        <end position="468"/>
    </location>
</feature>
<feature type="chain" id="PRO_0000396921" description="Ubiquitin-related 7">
    <location>
        <begin position="469"/>
        <end position="551"/>
    </location>
</feature>
<feature type="chain" id="PRO_0000396922" description="Ubiquitin-related 8">
    <location>
        <begin position="552"/>
        <end position="627"/>
    </location>
</feature>
<feature type="propeptide" id="PRO_0000396923" evidence="3">
    <location>
        <begin position="628"/>
        <end position="631"/>
    </location>
</feature>
<feature type="domain" description="Ubiquitin-like 1" evidence="2">
    <location>
        <begin position="3"/>
        <end position="78"/>
    </location>
</feature>
<feature type="domain" description="Ubiquitin-like 2" evidence="2">
    <location>
        <begin position="79"/>
        <end position="154"/>
    </location>
</feature>
<feature type="domain" description="Ubiquitin-like 3" evidence="2">
    <location>
        <begin position="155"/>
        <end position="237"/>
    </location>
</feature>
<feature type="domain" description="Ubiquitin-like 4" evidence="2">
    <location>
        <begin position="238"/>
        <end position="318"/>
    </location>
</feature>
<feature type="domain" description="Ubiquitin-like 5" evidence="2">
    <location>
        <begin position="319"/>
        <end position="392"/>
    </location>
</feature>
<feature type="domain" description="Ubiquitin-like 6" evidence="2">
    <location>
        <begin position="393"/>
        <end position="468"/>
    </location>
</feature>
<feature type="domain" description="Ubiquitin-like 7" evidence="2">
    <location>
        <begin position="469"/>
        <end position="551"/>
    </location>
</feature>
<feature type="domain" description="Ubiquitin-like 8" evidence="2">
    <location>
        <begin position="552"/>
        <end position="627"/>
    </location>
</feature>
<feature type="cross-link" description="Glycyl lysine isopeptide (Gly-Lys) (interchain with K-? in acceptor proteins)" evidence="2">
    <location>
        <position position="78"/>
    </location>
</feature>
<feature type="cross-link" description="Glycyl lysine isopeptide (Gly-Lys) (interchain with K-? in acceptor proteins)" evidence="2">
    <location>
        <position position="154"/>
    </location>
</feature>
<feature type="cross-link" description="Glycyl lysine isopeptide (Gly-Lys) (interchain with K-? in acceptor proteins)" evidence="2">
    <location>
        <position position="551"/>
    </location>
</feature>
<evidence type="ECO:0000250" key="1"/>
<evidence type="ECO:0000255" key="2">
    <source>
        <dbReference type="PROSITE-ProRule" id="PRU00214"/>
    </source>
</evidence>
<evidence type="ECO:0000305" key="3"/>
<gene>
    <name type="primary">UBQ8</name>
    <name type="ordered locus">At3g09790</name>
    <name type="ORF">F11F8_38</name>
    <name type="ORF">F8A24.16</name>
</gene>